<proteinExistence type="inferred from homology"/>
<accession>A6WYM5</accession>
<comment type="function">
    <text evidence="1">RNaseP catalyzes the removal of the 5'-leader sequence from pre-tRNA to produce the mature 5'-terminus. It can also cleave other RNA substrates such as 4.5S RNA. The protein component plays an auxiliary but essential role in vivo by binding to the 5'-leader sequence and broadening the substrate specificity of the ribozyme.</text>
</comment>
<comment type="catalytic activity">
    <reaction evidence="1">
        <text>Endonucleolytic cleavage of RNA, removing 5'-extranucleotides from tRNA precursor.</text>
        <dbReference type="EC" id="3.1.26.5"/>
    </reaction>
</comment>
<comment type="subunit">
    <text evidence="1">Consists of a catalytic RNA component (M1 or rnpB) and a protein subunit.</text>
</comment>
<comment type="similarity">
    <text evidence="1">Belongs to the RnpA family.</text>
</comment>
<keyword id="KW-0255">Endonuclease</keyword>
<keyword id="KW-0378">Hydrolase</keyword>
<keyword id="KW-0540">Nuclease</keyword>
<keyword id="KW-1185">Reference proteome</keyword>
<keyword id="KW-0694">RNA-binding</keyword>
<keyword id="KW-0819">tRNA processing</keyword>
<dbReference type="EC" id="3.1.26.5" evidence="1"/>
<dbReference type="EMBL" id="CP000758">
    <property type="protein sequence ID" value="ABS14079.1"/>
    <property type="molecule type" value="Genomic_DNA"/>
</dbReference>
<dbReference type="RefSeq" id="WP_010659430.1">
    <property type="nucleotide sequence ID" value="NC_009667.1"/>
</dbReference>
<dbReference type="SMR" id="A6WYM5"/>
<dbReference type="STRING" id="439375.Oant_1362"/>
<dbReference type="GeneID" id="61318134"/>
<dbReference type="KEGG" id="oan:Oant_1362"/>
<dbReference type="PATRIC" id="fig|439375.7.peg.1428"/>
<dbReference type="eggNOG" id="COG0594">
    <property type="taxonomic scope" value="Bacteria"/>
</dbReference>
<dbReference type="HOGENOM" id="CLU_117179_6_1_5"/>
<dbReference type="Proteomes" id="UP000002301">
    <property type="component" value="Chromosome 1"/>
</dbReference>
<dbReference type="GO" id="GO:0030677">
    <property type="term" value="C:ribonuclease P complex"/>
    <property type="evidence" value="ECO:0007669"/>
    <property type="project" value="TreeGrafter"/>
</dbReference>
<dbReference type="GO" id="GO:0042781">
    <property type="term" value="F:3'-tRNA processing endoribonuclease activity"/>
    <property type="evidence" value="ECO:0007669"/>
    <property type="project" value="TreeGrafter"/>
</dbReference>
<dbReference type="GO" id="GO:0004526">
    <property type="term" value="F:ribonuclease P activity"/>
    <property type="evidence" value="ECO:0007669"/>
    <property type="project" value="UniProtKB-UniRule"/>
</dbReference>
<dbReference type="GO" id="GO:0000049">
    <property type="term" value="F:tRNA binding"/>
    <property type="evidence" value="ECO:0007669"/>
    <property type="project" value="UniProtKB-UniRule"/>
</dbReference>
<dbReference type="GO" id="GO:0001682">
    <property type="term" value="P:tRNA 5'-leader removal"/>
    <property type="evidence" value="ECO:0007669"/>
    <property type="project" value="UniProtKB-UniRule"/>
</dbReference>
<dbReference type="Gene3D" id="3.30.230.10">
    <property type="match status" value="1"/>
</dbReference>
<dbReference type="HAMAP" id="MF_00227">
    <property type="entry name" value="RNase_P"/>
    <property type="match status" value="1"/>
</dbReference>
<dbReference type="InterPro" id="IPR020568">
    <property type="entry name" value="Ribosomal_Su5_D2-typ_SF"/>
</dbReference>
<dbReference type="InterPro" id="IPR014721">
    <property type="entry name" value="Ribsml_uS5_D2-typ_fold_subgr"/>
</dbReference>
<dbReference type="InterPro" id="IPR000100">
    <property type="entry name" value="RNase_P"/>
</dbReference>
<dbReference type="InterPro" id="IPR020539">
    <property type="entry name" value="RNase_P_CS"/>
</dbReference>
<dbReference type="NCBIfam" id="TIGR00188">
    <property type="entry name" value="rnpA"/>
    <property type="match status" value="1"/>
</dbReference>
<dbReference type="PANTHER" id="PTHR33992">
    <property type="entry name" value="RIBONUCLEASE P PROTEIN COMPONENT"/>
    <property type="match status" value="1"/>
</dbReference>
<dbReference type="PANTHER" id="PTHR33992:SF1">
    <property type="entry name" value="RIBONUCLEASE P PROTEIN COMPONENT"/>
    <property type="match status" value="1"/>
</dbReference>
<dbReference type="Pfam" id="PF00825">
    <property type="entry name" value="Ribonuclease_P"/>
    <property type="match status" value="1"/>
</dbReference>
<dbReference type="SUPFAM" id="SSF54211">
    <property type="entry name" value="Ribosomal protein S5 domain 2-like"/>
    <property type="match status" value="1"/>
</dbReference>
<dbReference type="PROSITE" id="PS00648">
    <property type="entry name" value="RIBONUCLEASE_P"/>
    <property type="match status" value="1"/>
</dbReference>
<reference key="1">
    <citation type="journal article" date="2011" name="J. Bacteriol.">
        <title>Genome of Ochrobactrum anthropi ATCC 49188 T, a versatile opportunistic pathogen and symbiont of several eukaryotic hosts.</title>
        <authorList>
            <person name="Chain P.S."/>
            <person name="Lang D.M."/>
            <person name="Comerci D.J."/>
            <person name="Malfatti S.A."/>
            <person name="Vergez L.M."/>
            <person name="Shin M."/>
            <person name="Ugalde R.A."/>
            <person name="Garcia E."/>
            <person name="Tolmasky M.E."/>
        </authorList>
    </citation>
    <scope>NUCLEOTIDE SEQUENCE [LARGE SCALE GENOMIC DNA]</scope>
    <source>
        <strain>ATCC 49188 / DSM 6882 / CCUG 24695 / JCM 21032 / LMG 3331 / NBRC 15819 / NCTC 12168 / Alc 37</strain>
    </source>
</reference>
<sequence>MNKPKQILRLRKRAEFLALRNGEKRRGPLFLLEVRERTEEESQTAKIGEKPRAGFTVTKKNGNAVIRNRIRRRLREAVRCHAGRDMAPSTDYVIVAREQALTAPFSRLTEELSRRIKAKGERRGDGKRRTERPESGPVNGK</sequence>
<gene>
    <name evidence="1" type="primary">rnpA</name>
    <name type="ordered locus">Oant_1362</name>
</gene>
<name>RNPA_BRUA4</name>
<evidence type="ECO:0000255" key="1">
    <source>
        <dbReference type="HAMAP-Rule" id="MF_00227"/>
    </source>
</evidence>
<evidence type="ECO:0000256" key="2">
    <source>
        <dbReference type="SAM" id="MobiDB-lite"/>
    </source>
</evidence>
<protein>
    <recommendedName>
        <fullName evidence="1">Ribonuclease P protein component</fullName>
        <shortName evidence="1">RNase P protein</shortName>
        <shortName evidence="1">RNaseP protein</shortName>
        <ecNumber evidence="1">3.1.26.5</ecNumber>
    </recommendedName>
    <alternativeName>
        <fullName evidence="1">Protein C5</fullName>
    </alternativeName>
</protein>
<feature type="chain" id="PRO_1000021440" description="Ribonuclease P protein component">
    <location>
        <begin position="1"/>
        <end position="141"/>
    </location>
</feature>
<feature type="region of interest" description="Disordered" evidence="2">
    <location>
        <begin position="114"/>
        <end position="141"/>
    </location>
</feature>
<feature type="compositionally biased region" description="Basic and acidic residues" evidence="2">
    <location>
        <begin position="114"/>
        <end position="134"/>
    </location>
</feature>
<organism>
    <name type="scientific">Brucella anthropi (strain ATCC 49188 / DSM 6882 / CCUG 24695 / JCM 21032 / LMG 3331 / NBRC 15819 / NCTC 12168 / Alc 37)</name>
    <name type="common">Ochrobactrum anthropi</name>
    <dbReference type="NCBI Taxonomy" id="439375"/>
    <lineage>
        <taxon>Bacteria</taxon>
        <taxon>Pseudomonadati</taxon>
        <taxon>Pseudomonadota</taxon>
        <taxon>Alphaproteobacteria</taxon>
        <taxon>Hyphomicrobiales</taxon>
        <taxon>Brucellaceae</taxon>
        <taxon>Brucella/Ochrobactrum group</taxon>
        <taxon>Brucella</taxon>
    </lineage>
</organism>